<proteinExistence type="inferred from homology"/>
<sequence length="115" mass="13208">MDPLIQELTKEQLRDDMPEFRAGDTVRVHVRVVEGTHERIQIFEGVVIKKRGTGIGATYTVRKIASGVGVERTFPVNTPRVAKVEVIRHGRVRRAKLYYLRTRSGKAARITERRR</sequence>
<reference key="1">
    <citation type="journal article" date="2006" name="Proc. Natl. Acad. Sci. U.S.A.">
        <title>Comparative genomics of the lactic acid bacteria.</title>
        <authorList>
            <person name="Makarova K.S."/>
            <person name="Slesarev A."/>
            <person name="Wolf Y.I."/>
            <person name="Sorokin A."/>
            <person name="Mirkin B."/>
            <person name="Koonin E.V."/>
            <person name="Pavlov A."/>
            <person name="Pavlova N."/>
            <person name="Karamychev V."/>
            <person name="Polouchine N."/>
            <person name="Shakhova V."/>
            <person name="Grigoriev I."/>
            <person name="Lou Y."/>
            <person name="Rohksar D."/>
            <person name="Lucas S."/>
            <person name="Huang K."/>
            <person name="Goodstein D.M."/>
            <person name="Hawkins T."/>
            <person name="Plengvidhya V."/>
            <person name="Welker D."/>
            <person name="Hughes J."/>
            <person name="Goh Y."/>
            <person name="Benson A."/>
            <person name="Baldwin K."/>
            <person name="Lee J.-H."/>
            <person name="Diaz-Muniz I."/>
            <person name="Dosti B."/>
            <person name="Smeianov V."/>
            <person name="Wechter W."/>
            <person name="Barabote R."/>
            <person name="Lorca G."/>
            <person name="Altermann E."/>
            <person name="Barrangou R."/>
            <person name="Ganesan B."/>
            <person name="Xie Y."/>
            <person name="Rawsthorne H."/>
            <person name="Tamir D."/>
            <person name="Parker C."/>
            <person name="Breidt F."/>
            <person name="Broadbent J.R."/>
            <person name="Hutkins R."/>
            <person name="O'Sullivan D."/>
            <person name="Steele J."/>
            <person name="Unlu G."/>
            <person name="Saier M.H. Jr."/>
            <person name="Klaenhammer T."/>
            <person name="Richardson P."/>
            <person name="Kozyavkin S."/>
            <person name="Weimer B.C."/>
            <person name="Mills D.A."/>
        </authorList>
    </citation>
    <scope>NUCLEOTIDE SEQUENCE [LARGE SCALE GENOMIC DNA]</scope>
    <source>
        <strain>ATCC BAA-365 / Lb-18</strain>
    </source>
</reference>
<comment type="function">
    <text evidence="1">This protein is located at the 30S-50S ribosomal subunit interface and may play a role in the structure and function of the aminoacyl-tRNA binding site.</text>
</comment>
<comment type="similarity">
    <text evidence="1">Belongs to the bacterial ribosomal protein bL19 family.</text>
</comment>
<organism>
    <name type="scientific">Lactobacillus delbrueckii subsp. bulgaricus (strain ATCC BAA-365 / Lb-18)</name>
    <dbReference type="NCBI Taxonomy" id="321956"/>
    <lineage>
        <taxon>Bacteria</taxon>
        <taxon>Bacillati</taxon>
        <taxon>Bacillota</taxon>
        <taxon>Bacilli</taxon>
        <taxon>Lactobacillales</taxon>
        <taxon>Lactobacillaceae</taxon>
        <taxon>Lactobacillus</taxon>
    </lineage>
</organism>
<dbReference type="EMBL" id="CP000412">
    <property type="protein sequence ID" value="ABJ58799.1"/>
    <property type="molecule type" value="Genomic_DNA"/>
</dbReference>
<dbReference type="RefSeq" id="WP_011544015.1">
    <property type="nucleotide sequence ID" value="NC_008529.1"/>
</dbReference>
<dbReference type="SMR" id="Q049S3"/>
<dbReference type="KEGG" id="lbu:LBUL_1273"/>
<dbReference type="HOGENOM" id="CLU_103507_2_1_9"/>
<dbReference type="BioCyc" id="LDEL321956:LBUL_RS05985-MONOMER"/>
<dbReference type="GO" id="GO:0022625">
    <property type="term" value="C:cytosolic large ribosomal subunit"/>
    <property type="evidence" value="ECO:0007669"/>
    <property type="project" value="TreeGrafter"/>
</dbReference>
<dbReference type="GO" id="GO:0003735">
    <property type="term" value="F:structural constituent of ribosome"/>
    <property type="evidence" value="ECO:0007669"/>
    <property type="project" value="InterPro"/>
</dbReference>
<dbReference type="GO" id="GO:0006412">
    <property type="term" value="P:translation"/>
    <property type="evidence" value="ECO:0007669"/>
    <property type="project" value="UniProtKB-UniRule"/>
</dbReference>
<dbReference type="FunFam" id="2.30.30.790:FF:000001">
    <property type="entry name" value="50S ribosomal protein L19"/>
    <property type="match status" value="1"/>
</dbReference>
<dbReference type="Gene3D" id="2.30.30.790">
    <property type="match status" value="1"/>
</dbReference>
<dbReference type="HAMAP" id="MF_00402">
    <property type="entry name" value="Ribosomal_bL19"/>
    <property type="match status" value="1"/>
</dbReference>
<dbReference type="InterPro" id="IPR001857">
    <property type="entry name" value="Ribosomal_bL19"/>
</dbReference>
<dbReference type="InterPro" id="IPR018257">
    <property type="entry name" value="Ribosomal_bL19_CS"/>
</dbReference>
<dbReference type="InterPro" id="IPR038657">
    <property type="entry name" value="Ribosomal_bL19_sf"/>
</dbReference>
<dbReference type="InterPro" id="IPR008991">
    <property type="entry name" value="Translation_prot_SH3-like_sf"/>
</dbReference>
<dbReference type="NCBIfam" id="TIGR01024">
    <property type="entry name" value="rplS_bact"/>
    <property type="match status" value="1"/>
</dbReference>
<dbReference type="PANTHER" id="PTHR15680:SF9">
    <property type="entry name" value="LARGE RIBOSOMAL SUBUNIT PROTEIN BL19M"/>
    <property type="match status" value="1"/>
</dbReference>
<dbReference type="PANTHER" id="PTHR15680">
    <property type="entry name" value="RIBOSOMAL PROTEIN L19"/>
    <property type="match status" value="1"/>
</dbReference>
<dbReference type="Pfam" id="PF01245">
    <property type="entry name" value="Ribosomal_L19"/>
    <property type="match status" value="1"/>
</dbReference>
<dbReference type="PIRSF" id="PIRSF002191">
    <property type="entry name" value="Ribosomal_L19"/>
    <property type="match status" value="1"/>
</dbReference>
<dbReference type="PRINTS" id="PR00061">
    <property type="entry name" value="RIBOSOMALL19"/>
</dbReference>
<dbReference type="SUPFAM" id="SSF50104">
    <property type="entry name" value="Translation proteins SH3-like domain"/>
    <property type="match status" value="1"/>
</dbReference>
<dbReference type="PROSITE" id="PS01015">
    <property type="entry name" value="RIBOSOMAL_L19"/>
    <property type="match status" value="1"/>
</dbReference>
<accession>Q049S3</accession>
<evidence type="ECO:0000255" key="1">
    <source>
        <dbReference type="HAMAP-Rule" id="MF_00402"/>
    </source>
</evidence>
<evidence type="ECO:0000305" key="2"/>
<name>RL19_LACDB</name>
<feature type="chain" id="PRO_1000049692" description="Large ribosomal subunit protein bL19">
    <location>
        <begin position="1"/>
        <end position="115"/>
    </location>
</feature>
<gene>
    <name evidence="1" type="primary">rplS</name>
    <name type="ordered locus">LBUL_1273</name>
</gene>
<protein>
    <recommendedName>
        <fullName evidence="1">Large ribosomal subunit protein bL19</fullName>
    </recommendedName>
    <alternativeName>
        <fullName evidence="2">50S ribosomal protein L19</fullName>
    </alternativeName>
</protein>
<keyword id="KW-0687">Ribonucleoprotein</keyword>
<keyword id="KW-0689">Ribosomal protein</keyword>